<reference key="1">
    <citation type="journal article" date="2004" name="Nature">
        <title>Genesis of a highly pathogenic and potentially pandemic H5N1 influenza virus in eastern Asia.</title>
        <authorList>
            <person name="Li K.S."/>
            <person name="Guan Y."/>
            <person name="Wang J."/>
            <person name="Smith G.J.D."/>
            <person name="Xu K.M."/>
            <person name="Duan L."/>
            <person name="Rahardjo A.P."/>
            <person name="Puthavathana P."/>
            <person name="Buranathai C."/>
            <person name="Nguyen T.D."/>
            <person name="Estoepangestie A.T.S."/>
            <person name="Chaisingh A."/>
            <person name="Auewarakul P."/>
            <person name="Long H.T."/>
            <person name="Hanh N.T.H."/>
            <person name="Webby R.J."/>
            <person name="Poon L.L.M."/>
            <person name="Chen H."/>
            <person name="Shortridge K.F."/>
            <person name="Yuen K.Y."/>
            <person name="Webster R.G."/>
            <person name="Peiris J.S.M."/>
        </authorList>
    </citation>
    <scope>NUCLEOTIDE SEQUENCE [GENOMIC RNA]</scope>
</reference>
<proteinExistence type="inferred from homology"/>
<feature type="chain" id="PRO_0000311753" description="Non-structural protein 1">
    <location>
        <begin position="1" status="less than"/>
        <end position="208"/>
    </location>
</feature>
<feature type="region of interest" description="CPSF4-binding" evidence="1">
    <location>
        <begin position="158"/>
        <end position="193"/>
    </location>
</feature>
<feature type="region of interest" description="Disordered" evidence="2">
    <location>
        <begin position="184"/>
        <end position="208"/>
    </location>
</feature>
<feature type="region of interest" description="PABPN1-binding" evidence="1">
    <location>
        <begin position="201"/>
        <end position="208"/>
    </location>
</feature>
<feature type="short sequence motif" description="Nuclear localization signal" evidence="1">
    <location>
        <begin position="17"/>
        <end position="21"/>
    </location>
</feature>
<feature type="short sequence motif" description="Nuclear export signal" evidence="1">
    <location>
        <begin position="115"/>
        <end position="124"/>
    </location>
</feature>
<feature type="non-terminal residue">
    <location>
        <position position="1"/>
    </location>
</feature>
<name>NS1_I02A7</name>
<sequence length="208" mass="23568">VRKRFADQELGDAPFLDRLRRDQKSLRGRGNTLGLDIETATRAGKQIVERILEEESDEALKMPASRYLTDMTLEEMSRDWFMLMPKQKVAGSLCIKMDQAIMDKNIILKANFSVIFDRLETLILLRAFTEEGAIVGEISPLPSLPGHTDEDVKNAIGVLIGGLEWNDNTVRVSEALQRFAWRSSDENGRPPLPPNQKRKMARTIESEV</sequence>
<keyword id="KW-0025">Alternative splicing</keyword>
<keyword id="KW-1262">Eukaryotic host gene expression shutoff by virus</keyword>
<keyword id="KW-1035">Host cytoplasm</keyword>
<keyword id="KW-1190">Host gene expression shutoff by virus</keyword>
<keyword id="KW-1192">Host mRNA suppression by virus</keyword>
<keyword id="KW-1048">Host nucleus</keyword>
<keyword id="KW-0945">Host-virus interaction</keyword>
<keyword id="KW-1090">Inhibition of host innate immune response by virus</keyword>
<keyword id="KW-1114">Inhibition of host interferon signaling pathway by virus</keyword>
<keyword id="KW-1102">Inhibition of host PKR by virus</keyword>
<keyword id="KW-1103">Inhibition of host pre-mRNA processing by virus</keyword>
<keyword id="KW-1088">Inhibition of host RIG-I by virus</keyword>
<keyword id="KW-1113">Inhibition of host RLR pathway by virus</keyword>
<keyword id="KW-0922">Interferon antiviral system evasion</keyword>
<keyword id="KW-0694">RNA-binding</keyword>
<keyword id="KW-0832">Ubl conjugation</keyword>
<keyword id="KW-0899">Viral immunoevasion</keyword>
<evidence type="ECO:0000255" key="1">
    <source>
        <dbReference type="HAMAP-Rule" id="MF_04066"/>
    </source>
</evidence>
<evidence type="ECO:0000256" key="2">
    <source>
        <dbReference type="SAM" id="MobiDB-lite"/>
    </source>
</evidence>
<organismHost>
    <name type="scientific">Aves</name>
    <dbReference type="NCBI Taxonomy" id="8782"/>
</organismHost>
<organismHost>
    <name type="scientific">Felis catus</name>
    <name type="common">Cat</name>
    <name type="synonym">Felis silvestris catus</name>
    <dbReference type="NCBI Taxonomy" id="9685"/>
</organismHost>
<organismHost>
    <name type="scientific">Homo sapiens</name>
    <name type="common">Human</name>
    <dbReference type="NCBI Taxonomy" id="9606"/>
</organismHost>
<organismHost>
    <name type="scientific">Panthera pardus</name>
    <name type="common">Leopard</name>
    <name type="synonym">Felis pardus</name>
    <dbReference type="NCBI Taxonomy" id="9691"/>
</organismHost>
<organismHost>
    <name type="scientific">Panthera tigris</name>
    <name type="common">Tiger</name>
    <dbReference type="NCBI Taxonomy" id="9694"/>
</organismHost>
<organismHost>
    <name type="scientific">Sus scrofa</name>
    <name type="common">Pig</name>
    <dbReference type="NCBI Taxonomy" id="9823"/>
</organismHost>
<organism>
    <name type="scientific">Influenza A virus (strain A/Teal/China/2978.1/2002 H5N1 genotype W)</name>
    <dbReference type="NCBI Taxonomy" id="284215"/>
    <lineage>
        <taxon>Viruses</taxon>
        <taxon>Riboviria</taxon>
        <taxon>Orthornavirae</taxon>
        <taxon>Negarnaviricota</taxon>
        <taxon>Polyploviricotina</taxon>
        <taxon>Insthoviricetes</taxon>
        <taxon>Articulavirales</taxon>
        <taxon>Orthomyxoviridae</taxon>
        <taxon>Alphainfluenzavirus</taxon>
        <taxon>Alphainfluenzavirus influenzae</taxon>
        <taxon>Influenza A virus</taxon>
    </lineage>
</organism>
<gene>
    <name evidence="1" type="primary">NS</name>
</gene>
<protein>
    <recommendedName>
        <fullName evidence="1">Non-structural protein 1</fullName>
        <shortName evidence="1">NS1</shortName>
    </recommendedName>
    <alternativeName>
        <fullName evidence="1">NS1A</fullName>
    </alternativeName>
</protein>
<dbReference type="EMBL" id="AY651581">
    <property type="protein sequence ID" value="AAT73451.1"/>
    <property type="molecule type" value="Genomic_RNA"/>
</dbReference>
<dbReference type="SMR" id="Q6DP37"/>
<dbReference type="GO" id="GO:0030430">
    <property type="term" value="C:host cell cytoplasm"/>
    <property type="evidence" value="ECO:0007669"/>
    <property type="project" value="UniProtKB-SubCell"/>
</dbReference>
<dbReference type="GO" id="GO:0042025">
    <property type="term" value="C:host cell nucleus"/>
    <property type="evidence" value="ECO:0007669"/>
    <property type="project" value="UniProtKB-SubCell"/>
</dbReference>
<dbReference type="GO" id="GO:0030291">
    <property type="term" value="F:protein serine/threonine kinase inhibitor activity"/>
    <property type="evidence" value="ECO:0007669"/>
    <property type="project" value="UniProtKB-KW"/>
</dbReference>
<dbReference type="GO" id="GO:0003723">
    <property type="term" value="F:RNA binding"/>
    <property type="evidence" value="ECO:0007669"/>
    <property type="project" value="UniProtKB-KW"/>
</dbReference>
<dbReference type="GO" id="GO:0039540">
    <property type="term" value="P:symbiont-mediated suppression of host cytoplasmic pattern recognition receptor signaling pathway via inhibition of RIG-I activity"/>
    <property type="evidence" value="ECO:0007669"/>
    <property type="project" value="UniProtKB-KW"/>
</dbReference>
<dbReference type="GO" id="GO:0039657">
    <property type="term" value="P:symbiont-mediated suppression of host gene expression"/>
    <property type="evidence" value="ECO:0007669"/>
    <property type="project" value="UniProtKB-KW"/>
</dbReference>
<dbReference type="GO" id="GO:0039524">
    <property type="term" value="P:symbiont-mediated suppression of host mRNA processing"/>
    <property type="evidence" value="ECO:0007669"/>
    <property type="project" value="UniProtKB-KW"/>
</dbReference>
<dbReference type="GO" id="GO:0039580">
    <property type="term" value="P:symbiont-mediated suppression of host PKR/eIFalpha signaling"/>
    <property type="evidence" value="ECO:0007669"/>
    <property type="project" value="UniProtKB-KW"/>
</dbReference>
<dbReference type="GO" id="GO:0039502">
    <property type="term" value="P:symbiont-mediated suppression of host type I interferon-mediated signaling pathway"/>
    <property type="evidence" value="ECO:0007669"/>
    <property type="project" value="UniProtKB-KW"/>
</dbReference>
<dbReference type="FunFam" id="3.30.420.330:FF:000001">
    <property type="entry name" value="Non-structural protein 1"/>
    <property type="match status" value="1"/>
</dbReference>
<dbReference type="Gene3D" id="3.30.420.330">
    <property type="entry name" value="Influenza virus non-structural protein, effector domain"/>
    <property type="match status" value="1"/>
</dbReference>
<dbReference type="Gene3D" id="1.10.287.10">
    <property type="entry name" value="S15/NS1, RNA-binding"/>
    <property type="match status" value="1"/>
</dbReference>
<dbReference type="HAMAP" id="MF_04066">
    <property type="entry name" value="INFV_NS1"/>
    <property type="match status" value="1"/>
</dbReference>
<dbReference type="InterPro" id="IPR004208">
    <property type="entry name" value="NS1"/>
</dbReference>
<dbReference type="InterPro" id="IPR000256">
    <property type="entry name" value="NS1A"/>
</dbReference>
<dbReference type="InterPro" id="IPR038064">
    <property type="entry name" value="NS1A_effect_dom-like_sf"/>
</dbReference>
<dbReference type="InterPro" id="IPR009068">
    <property type="entry name" value="uS15_NS1_RNA-bd_sf"/>
</dbReference>
<dbReference type="Pfam" id="PF00600">
    <property type="entry name" value="Flu_NS1"/>
    <property type="match status" value="1"/>
</dbReference>
<dbReference type="SUPFAM" id="SSF143021">
    <property type="entry name" value="Ns1 effector domain-like"/>
    <property type="match status" value="1"/>
</dbReference>
<dbReference type="SUPFAM" id="SSF47060">
    <property type="entry name" value="S15/NS1 RNA-binding domain"/>
    <property type="match status" value="1"/>
</dbReference>
<accession>Q6DP37</accession>
<comment type="function">
    <text evidence="1">Inhibits post-transcriptional processing of cellular pre-mRNA, by binding and inhibiting two cellular proteins that are required for the 3'-end processing of cellular pre-mRNAs: the 30 kDa cleavage and polyadenylation specificity factor/CPSF4 and the poly(A)-binding protein 2/PABPN1. In turn, unprocessed 3' end pre-mRNAs accumulate in the host nucleus and are no longer exported to the cytoplasm. Cellular protein synthesis is thereby shut off very early after virus infection. Viral protein synthesis is not affected by the inhibition of the cellular 3' end processing machinery because the poly(A) tails of viral mRNAs are produced by the viral polymerase through a stuttering mechanism. Prevents the establishment of the cellular antiviral state by inhibiting TRIM25-mediated RIGI ubiquitination, which normally triggers the antiviral transduction signal that leads to the activation of type I IFN genes by transcription factors IRF3 and IRF7. Also binds poly(A) and U6 snRNA. Inhibits the integrated stress response (ISR) in the infected cell by blocking dsRNA binding by EIF2AK2/PKR and further phosphorylation of EIF2S1/EIF-2ALPHA. Stress granule formation is thus inhibited, which allows protein synthesis and viral replication.</text>
</comment>
<comment type="subunit">
    <text evidence="1">Homodimer. Interacts with host TRIM25 (via coiled coil); this interaction specifically inhibits TRIM25 multimerization and TRIM25-mediated RIGI CARD ubiquitination. Interacts with human EIF2AK2/PKR, CPSF4, IVNS1ABP and PABPN1.</text>
</comment>
<comment type="subcellular location">
    <subcellularLocation>
        <location evidence="1">Host nucleus</location>
    </subcellularLocation>
    <subcellularLocation>
        <location evidence="1">Host cytoplasm</location>
    </subcellularLocation>
    <text evidence="1">In uninfected, transfected cells, NS1 is localized in the nucleus. Only in virus infected cells, the nuclear export signal is unveiled, presumably by a viral protein, and a fraction of NS1 is exported in the cytoplasm.</text>
</comment>
<comment type="alternative products">
    <event type="alternative splicing"/>
    <isoform>
        <id>Q6DP37-1</id>
        <name>NS1</name>
        <sequence type="displayed"/>
    </isoform>
    <isoform>
        <id>Q6DP36-1</id>
        <name>NEP</name>
        <name>NS2</name>
        <sequence type="external"/>
    </isoform>
</comment>
<comment type="domain">
    <text evidence="1">The dsRNA-binding region is required for suppression of RNA silencing.</text>
</comment>
<comment type="PTM">
    <text evidence="1">Upon interferon induction, ISGylated via host HERC5; this results in the impairment of NS1 interaction with RNA targets due to its inability to form homodimers and to interact with host EIF2AK2/PKR.</text>
</comment>
<comment type="similarity">
    <text evidence="1">Belongs to the influenza A viruses NS1 family.</text>
</comment>